<sequence>MSDRKRVYGPSVSVPPYFEEPEQPVFTRTRDVDRCRKIYLKLGWATKAVGSSYFESEKIKIACTVSGPRPSKTFAFRSSAKLNCEFRLSPFSTSVRQGHVQTVEEKSYSQMIEAAISPSILLHLYPKSSIDVYIQVIESDGALATLAAAISCASSAIADANIDCIDLVTGSSVLFNPNTDEYWIDPDYVDERARAAKGSVVMGYMASLGHVTQVWERGTCSPSRLSFLTEKCIKNAKDTRLVINHALLLEKSKSEDP</sequence>
<accession>Q9P7R3</accession>
<proteinExistence type="inferred from homology"/>
<feature type="chain" id="PRO_0000317211" description="Exosome complex component mtr3">
    <location>
        <begin position="1"/>
        <end position="257"/>
    </location>
</feature>
<protein>
    <recommendedName>
        <fullName>Exosome complex component mtr3</fullName>
    </recommendedName>
</protein>
<evidence type="ECO:0000250" key="1">
    <source>
        <dbReference type="UniProtKB" id="P48240"/>
    </source>
</evidence>
<evidence type="ECO:0000269" key="2">
    <source>
    </source>
</evidence>
<evidence type="ECO:0000305" key="3"/>
<name>MTR3_SCHPO</name>
<organism>
    <name type="scientific">Schizosaccharomyces pombe (strain 972 / ATCC 24843)</name>
    <name type="common">Fission yeast</name>
    <dbReference type="NCBI Taxonomy" id="284812"/>
    <lineage>
        <taxon>Eukaryota</taxon>
        <taxon>Fungi</taxon>
        <taxon>Dikarya</taxon>
        <taxon>Ascomycota</taxon>
        <taxon>Taphrinomycotina</taxon>
        <taxon>Schizosaccharomycetes</taxon>
        <taxon>Schizosaccharomycetales</taxon>
        <taxon>Schizosaccharomycetaceae</taxon>
        <taxon>Schizosaccharomyces</taxon>
    </lineage>
</organism>
<comment type="function">
    <text evidence="1">Non-catalytic component of the RNA exosome complex which has 3'-&gt;5' exoribonuclease activity and participates in a multitude of cellular RNA processing and degradation events. In the nucleus, the RNA exosome complex is involved in proper maturation of stable RNA species such as rRNA, snRNA and snoRNA, in the elimination of RNA processing by-products and non-coding 'pervasive' transcripts, such as antisense RNA species and cryptic unstable transcripts (CUTs), and of mRNAs with processing defects, thereby limiting or excluding their export to the cytoplasm. In the cytoplasm, the RNA exosome complex is involved in general mRNA turnover and in RNA surveillance pathways, preventing translation of aberrant mRNAs. The catalytic inactive RNA exosome core complex of 9 subunits (Exo-9) is proposed to play a pivotal role in the binding and presentation of RNA for ribonucleolysis, and to serve as a scaffold for the association with catalytic subunits and accessory proteins or complexes. ski6 is part of the hexameric ring of RNase PH domain-containing subunits proposed to form a central channel which threads RNA substrates for degradation (By similarity).</text>
</comment>
<comment type="subunit">
    <text evidence="1">Component of the RNA exosome complex. Specifically part of the catalytically inactive RNA exosome core complex (Exo-9) may associate with the catalytic subunits rrp6 and dis3 in cytoplasmic- and nuclear-specific RNA exosome complex forms. Exo-9 is formed by a hexameric base ring of RNase PH domain-containing subunits and a cap ring consisting of csl4, rrp4 and rrp40.</text>
</comment>
<comment type="subcellular location">
    <subcellularLocation>
        <location evidence="2">Cytoplasm</location>
    </subcellularLocation>
    <subcellularLocation>
        <location evidence="2">Nucleus</location>
        <location evidence="2">Nucleolus</location>
    </subcellularLocation>
</comment>
<comment type="similarity">
    <text evidence="3">Belongs to the RNase PH family.</text>
</comment>
<gene>
    <name type="primary">mtr3</name>
    <name type="ORF">SPBC211.08c</name>
</gene>
<keyword id="KW-0963">Cytoplasm</keyword>
<keyword id="KW-0271">Exosome</keyword>
<keyword id="KW-0539">Nucleus</keyword>
<keyword id="KW-1185">Reference proteome</keyword>
<keyword id="KW-0694">RNA-binding</keyword>
<keyword id="KW-0698">rRNA processing</keyword>
<dbReference type="EMBL" id="CU329671">
    <property type="protein sequence ID" value="CAB75416.1"/>
    <property type="molecule type" value="Genomic_DNA"/>
</dbReference>
<dbReference type="PIR" id="T50343">
    <property type="entry name" value="T50343"/>
</dbReference>
<dbReference type="RefSeq" id="NP_596618.1">
    <property type="nucleotide sequence ID" value="NM_001022539.2"/>
</dbReference>
<dbReference type="SMR" id="Q9P7R3"/>
<dbReference type="BioGRID" id="276940">
    <property type="interactions" value="7"/>
</dbReference>
<dbReference type="ComplexPortal" id="CPX-8914">
    <property type="entry name" value="Nucleolar exosome complex"/>
</dbReference>
<dbReference type="FunCoup" id="Q9P7R3">
    <property type="interactions" value="154"/>
</dbReference>
<dbReference type="STRING" id="284812.Q9P7R3"/>
<dbReference type="PaxDb" id="4896-SPBC211.08c.1"/>
<dbReference type="EnsemblFungi" id="SPBC211.08c.1">
    <property type="protein sequence ID" value="SPBC211.08c.1:pep"/>
    <property type="gene ID" value="SPBC211.08c"/>
</dbReference>
<dbReference type="GeneID" id="2540412"/>
<dbReference type="KEGG" id="spo:2540412"/>
<dbReference type="PomBase" id="SPBC211.08c">
    <property type="gene designation" value="mtr3"/>
</dbReference>
<dbReference type="VEuPathDB" id="FungiDB:SPBC211.08c"/>
<dbReference type="eggNOG" id="KOG1068">
    <property type="taxonomic scope" value="Eukaryota"/>
</dbReference>
<dbReference type="HOGENOM" id="CLU_063514_1_2_1"/>
<dbReference type="InParanoid" id="Q9P7R3"/>
<dbReference type="OMA" id="MCCVYGP"/>
<dbReference type="PhylomeDB" id="Q9P7R3"/>
<dbReference type="Reactome" id="R-SPO-429958">
    <property type="pathway name" value="mRNA decay by 3' to 5' exoribonuclease"/>
</dbReference>
<dbReference type="Reactome" id="R-SPO-6791226">
    <property type="pathway name" value="Major pathway of rRNA processing in the nucleolus and cytosol"/>
</dbReference>
<dbReference type="PRO" id="PR:Q9P7R3"/>
<dbReference type="Proteomes" id="UP000002485">
    <property type="component" value="Chromosome II"/>
</dbReference>
<dbReference type="GO" id="GO:0000177">
    <property type="term" value="C:cytoplasmic exosome (RNase complex)"/>
    <property type="evidence" value="ECO:0000318"/>
    <property type="project" value="GO_Central"/>
</dbReference>
<dbReference type="GO" id="GO:0005829">
    <property type="term" value="C:cytosol"/>
    <property type="evidence" value="ECO:0007005"/>
    <property type="project" value="PomBase"/>
</dbReference>
<dbReference type="GO" id="GO:0000178">
    <property type="term" value="C:exosome (RNase complex)"/>
    <property type="evidence" value="ECO:0000314"/>
    <property type="project" value="PomBase"/>
</dbReference>
<dbReference type="GO" id="GO:0000176">
    <property type="term" value="C:nuclear exosome (RNase complex)"/>
    <property type="evidence" value="ECO:0000269"/>
    <property type="project" value="PomBase"/>
</dbReference>
<dbReference type="GO" id="GO:0005730">
    <property type="term" value="C:nucleolus"/>
    <property type="evidence" value="ECO:0000318"/>
    <property type="project" value="GO_Central"/>
</dbReference>
<dbReference type="GO" id="GO:0005634">
    <property type="term" value="C:nucleus"/>
    <property type="evidence" value="ECO:0007005"/>
    <property type="project" value="PomBase"/>
</dbReference>
<dbReference type="GO" id="GO:0003723">
    <property type="term" value="F:RNA binding"/>
    <property type="evidence" value="ECO:0000318"/>
    <property type="project" value="GO_Central"/>
</dbReference>
<dbReference type="GO" id="GO:0000467">
    <property type="term" value="P:exonucleolytic trimming to generate mature 3'-end of 5.8S rRNA from tricistronic rRNA transcript (SSU-rRNA, 5.8S rRNA, LSU-rRNA)"/>
    <property type="evidence" value="ECO:0000266"/>
    <property type="project" value="PomBase"/>
</dbReference>
<dbReference type="GO" id="GO:0070651">
    <property type="term" value="P:nonfunctional rRNA decay"/>
    <property type="evidence" value="ECO:0000266"/>
    <property type="project" value="PomBase"/>
</dbReference>
<dbReference type="GO" id="GO:0071028">
    <property type="term" value="P:nuclear mRNA surveillance"/>
    <property type="evidence" value="ECO:0000318"/>
    <property type="project" value="GO_Central"/>
</dbReference>
<dbReference type="GO" id="GO:0071042">
    <property type="term" value="P:nuclear polyadenylation-dependent mRNA catabolic process"/>
    <property type="evidence" value="ECO:0000266"/>
    <property type="project" value="PomBase"/>
</dbReference>
<dbReference type="GO" id="GO:0071035">
    <property type="term" value="P:nuclear polyadenylation-dependent rRNA catabolic process"/>
    <property type="evidence" value="ECO:0000266"/>
    <property type="project" value="PomBase"/>
</dbReference>
<dbReference type="GO" id="GO:0070478">
    <property type="term" value="P:nuclear-transcribed mRNA catabolic process, 3'-5' exonucleolytic nonsense-mediated decay"/>
    <property type="evidence" value="ECO:0000266"/>
    <property type="project" value="PomBase"/>
</dbReference>
<dbReference type="GO" id="GO:0070481">
    <property type="term" value="P:nuclear-transcribed mRNA catabolic process, non-stop decay"/>
    <property type="evidence" value="ECO:0000266"/>
    <property type="project" value="PomBase"/>
</dbReference>
<dbReference type="GO" id="GO:0071051">
    <property type="term" value="P:poly(A)-dependent snoRNA 3'-end processing"/>
    <property type="evidence" value="ECO:0000318"/>
    <property type="project" value="GO_Central"/>
</dbReference>
<dbReference type="GO" id="GO:0016075">
    <property type="term" value="P:rRNA catabolic process"/>
    <property type="evidence" value="ECO:0000318"/>
    <property type="project" value="GO_Central"/>
</dbReference>
<dbReference type="GO" id="GO:0071038">
    <property type="term" value="P:TRAMP-dependent tRNA surveillance pathway"/>
    <property type="evidence" value="ECO:0000266"/>
    <property type="project" value="PomBase"/>
</dbReference>
<dbReference type="GO" id="GO:0034475">
    <property type="term" value="P:U4 snRNA 3'-end processing"/>
    <property type="evidence" value="ECO:0000318"/>
    <property type="project" value="GO_Central"/>
</dbReference>
<dbReference type="CDD" id="cd11371">
    <property type="entry name" value="RNase_PH_MTR3"/>
    <property type="match status" value="1"/>
</dbReference>
<dbReference type="Gene3D" id="3.30.230.70">
    <property type="entry name" value="GHMP Kinase, N-terminal domain"/>
    <property type="match status" value="1"/>
</dbReference>
<dbReference type="InterPro" id="IPR001247">
    <property type="entry name" value="ExoRNase_PH_dom1"/>
</dbReference>
<dbReference type="InterPro" id="IPR036345">
    <property type="entry name" value="ExoRNase_PH_dom2_sf"/>
</dbReference>
<dbReference type="InterPro" id="IPR027408">
    <property type="entry name" value="PNPase/RNase_PH_dom_sf"/>
</dbReference>
<dbReference type="InterPro" id="IPR020568">
    <property type="entry name" value="Ribosomal_Su5_D2-typ_SF"/>
</dbReference>
<dbReference type="InterPro" id="IPR050080">
    <property type="entry name" value="RNase_PH"/>
</dbReference>
<dbReference type="PANTHER" id="PTHR11953">
    <property type="entry name" value="EXOSOME COMPLEX COMPONENT"/>
    <property type="match status" value="1"/>
</dbReference>
<dbReference type="PANTHER" id="PTHR11953:SF2">
    <property type="entry name" value="EXOSOME COMPLEX COMPONENT MTR3"/>
    <property type="match status" value="1"/>
</dbReference>
<dbReference type="Pfam" id="PF01138">
    <property type="entry name" value="RNase_PH"/>
    <property type="match status" value="1"/>
</dbReference>
<dbReference type="SUPFAM" id="SSF55666">
    <property type="entry name" value="Ribonuclease PH domain 2-like"/>
    <property type="match status" value="1"/>
</dbReference>
<dbReference type="SUPFAM" id="SSF54211">
    <property type="entry name" value="Ribosomal protein S5 domain 2-like"/>
    <property type="match status" value="1"/>
</dbReference>
<reference key="1">
    <citation type="journal article" date="2002" name="Nature">
        <title>The genome sequence of Schizosaccharomyces pombe.</title>
        <authorList>
            <person name="Wood V."/>
            <person name="Gwilliam R."/>
            <person name="Rajandream M.A."/>
            <person name="Lyne M.H."/>
            <person name="Lyne R."/>
            <person name="Stewart A."/>
            <person name="Sgouros J.G."/>
            <person name="Peat N."/>
            <person name="Hayles J."/>
            <person name="Baker S.G."/>
            <person name="Basham D."/>
            <person name="Bowman S."/>
            <person name="Brooks K."/>
            <person name="Brown D."/>
            <person name="Brown S."/>
            <person name="Chillingworth T."/>
            <person name="Churcher C.M."/>
            <person name="Collins M."/>
            <person name="Connor R."/>
            <person name="Cronin A."/>
            <person name="Davis P."/>
            <person name="Feltwell T."/>
            <person name="Fraser A."/>
            <person name="Gentles S."/>
            <person name="Goble A."/>
            <person name="Hamlin N."/>
            <person name="Harris D.E."/>
            <person name="Hidalgo J."/>
            <person name="Hodgson G."/>
            <person name="Holroyd S."/>
            <person name="Hornsby T."/>
            <person name="Howarth S."/>
            <person name="Huckle E.J."/>
            <person name="Hunt S."/>
            <person name="Jagels K."/>
            <person name="James K.D."/>
            <person name="Jones L."/>
            <person name="Jones M."/>
            <person name="Leather S."/>
            <person name="McDonald S."/>
            <person name="McLean J."/>
            <person name="Mooney P."/>
            <person name="Moule S."/>
            <person name="Mungall K.L."/>
            <person name="Murphy L.D."/>
            <person name="Niblett D."/>
            <person name="Odell C."/>
            <person name="Oliver K."/>
            <person name="O'Neil S."/>
            <person name="Pearson D."/>
            <person name="Quail M.A."/>
            <person name="Rabbinowitsch E."/>
            <person name="Rutherford K.M."/>
            <person name="Rutter S."/>
            <person name="Saunders D."/>
            <person name="Seeger K."/>
            <person name="Sharp S."/>
            <person name="Skelton J."/>
            <person name="Simmonds M.N."/>
            <person name="Squares R."/>
            <person name="Squares S."/>
            <person name="Stevens K."/>
            <person name="Taylor K."/>
            <person name="Taylor R.G."/>
            <person name="Tivey A."/>
            <person name="Walsh S.V."/>
            <person name="Warren T."/>
            <person name="Whitehead S."/>
            <person name="Woodward J.R."/>
            <person name="Volckaert G."/>
            <person name="Aert R."/>
            <person name="Robben J."/>
            <person name="Grymonprez B."/>
            <person name="Weltjens I."/>
            <person name="Vanstreels E."/>
            <person name="Rieger M."/>
            <person name="Schaefer M."/>
            <person name="Mueller-Auer S."/>
            <person name="Gabel C."/>
            <person name="Fuchs M."/>
            <person name="Duesterhoeft A."/>
            <person name="Fritzc C."/>
            <person name="Holzer E."/>
            <person name="Moestl D."/>
            <person name="Hilbert H."/>
            <person name="Borzym K."/>
            <person name="Langer I."/>
            <person name="Beck A."/>
            <person name="Lehrach H."/>
            <person name="Reinhardt R."/>
            <person name="Pohl T.M."/>
            <person name="Eger P."/>
            <person name="Zimmermann W."/>
            <person name="Wedler H."/>
            <person name="Wambutt R."/>
            <person name="Purnelle B."/>
            <person name="Goffeau A."/>
            <person name="Cadieu E."/>
            <person name="Dreano S."/>
            <person name="Gloux S."/>
            <person name="Lelaure V."/>
            <person name="Mottier S."/>
            <person name="Galibert F."/>
            <person name="Aves S.J."/>
            <person name="Xiang Z."/>
            <person name="Hunt C."/>
            <person name="Moore K."/>
            <person name="Hurst S.M."/>
            <person name="Lucas M."/>
            <person name="Rochet M."/>
            <person name="Gaillardin C."/>
            <person name="Tallada V.A."/>
            <person name="Garzon A."/>
            <person name="Thode G."/>
            <person name="Daga R.R."/>
            <person name="Cruzado L."/>
            <person name="Jimenez J."/>
            <person name="Sanchez M."/>
            <person name="del Rey F."/>
            <person name="Benito J."/>
            <person name="Dominguez A."/>
            <person name="Revuelta J.L."/>
            <person name="Moreno S."/>
            <person name="Armstrong J."/>
            <person name="Forsburg S.L."/>
            <person name="Cerutti L."/>
            <person name="Lowe T."/>
            <person name="McCombie W.R."/>
            <person name="Paulsen I."/>
            <person name="Potashkin J."/>
            <person name="Shpakovski G.V."/>
            <person name="Ussery D."/>
            <person name="Barrell B.G."/>
            <person name="Nurse P."/>
        </authorList>
    </citation>
    <scope>NUCLEOTIDE SEQUENCE [LARGE SCALE GENOMIC DNA]</scope>
    <source>
        <strain>972 / ATCC 24843</strain>
    </source>
</reference>
<reference key="2">
    <citation type="journal article" date="2006" name="Nat. Biotechnol.">
        <title>ORFeome cloning and global analysis of protein localization in the fission yeast Schizosaccharomyces pombe.</title>
        <authorList>
            <person name="Matsuyama A."/>
            <person name="Arai R."/>
            <person name="Yashiroda Y."/>
            <person name="Shirai A."/>
            <person name="Kamata A."/>
            <person name="Sekido S."/>
            <person name="Kobayashi Y."/>
            <person name="Hashimoto A."/>
            <person name="Hamamoto M."/>
            <person name="Hiraoka Y."/>
            <person name="Horinouchi S."/>
            <person name="Yoshida M."/>
        </authorList>
    </citation>
    <scope>SUBCELLULAR LOCATION [LARGE SCALE ANALYSIS]</scope>
</reference>